<reference key="1">
    <citation type="journal article" date="2001" name="Nature">
        <title>Complete genome sequence of a multiple drug resistant Salmonella enterica serovar Typhi CT18.</title>
        <authorList>
            <person name="Parkhill J."/>
            <person name="Dougan G."/>
            <person name="James K.D."/>
            <person name="Thomson N.R."/>
            <person name="Pickard D."/>
            <person name="Wain J."/>
            <person name="Churcher C.M."/>
            <person name="Mungall K.L."/>
            <person name="Bentley S.D."/>
            <person name="Holden M.T.G."/>
            <person name="Sebaihia M."/>
            <person name="Baker S."/>
            <person name="Basham D."/>
            <person name="Brooks K."/>
            <person name="Chillingworth T."/>
            <person name="Connerton P."/>
            <person name="Cronin A."/>
            <person name="Davis P."/>
            <person name="Davies R.M."/>
            <person name="Dowd L."/>
            <person name="White N."/>
            <person name="Farrar J."/>
            <person name="Feltwell T."/>
            <person name="Hamlin N."/>
            <person name="Haque A."/>
            <person name="Hien T.T."/>
            <person name="Holroyd S."/>
            <person name="Jagels K."/>
            <person name="Krogh A."/>
            <person name="Larsen T.S."/>
            <person name="Leather S."/>
            <person name="Moule S."/>
            <person name="O'Gaora P."/>
            <person name="Parry C."/>
            <person name="Quail M.A."/>
            <person name="Rutherford K.M."/>
            <person name="Simmonds M."/>
            <person name="Skelton J."/>
            <person name="Stevens K."/>
            <person name="Whitehead S."/>
            <person name="Barrell B.G."/>
        </authorList>
    </citation>
    <scope>NUCLEOTIDE SEQUENCE [LARGE SCALE GENOMIC DNA]</scope>
    <source>
        <strain>CT18</strain>
    </source>
</reference>
<reference key="2">
    <citation type="journal article" date="2003" name="J. Bacteriol.">
        <title>Comparative genomics of Salmonella enterica serovar Typhi strains Ty2 and CT18.</title>
        <authorList>
            <person name="Deng W."/>
            <person name="Liou S.-R."/>
            <person name="Plunkett G. III"/>
            <person name="Mayhew G.F."/>
            <person name="Rose D.J."/>
            <person name="Burland V."/>
            <person name="Kodoyianni V."/>
            <person name="Schwartz D.C."/>
            <person name="Blattner F.R."/>
        </authorList>
    </citation>
    <scope>NUCLEOTIDE SEQUENCE [LARGE SCALE GENOMIC DNA]</scope>
    <source>
        <strain>ATCC 700931 / Ty2</strain>
    </source>
</reference>
<gene>
    <name evidence="1" type="primary">yggU</name>
    <name type="ordered locus">STY3255</name>
    <name type="ordered locus">t3014</name>
</gene>
<accession>Q8Z3U7</accession>
<organism>
    <name type="scientific">Salmonella typhi</name>
    <dbReference type="NCBI Taxonomy" id="90370"/>
    <lineage>
        <taxon>Bacteria</taxon>
        <taxon>Pseudomonadati</taxon>
        <taxon>Pseudomonadota</taxon>
        <taxon>Gammaproteobacteria</taxon>
        <taxon>Enterobacterales</taxon>
        <taxon>Enterobacteriaceae</taxon>
        <taxon>Salmonella</taxon>
    </lineage>
</organism>
<proteinExistence type="inferred from homology"/>
<dbReference type="EMBL" id="AL513382">
    <property type="protein sequence ID" value="CAD02926.1"/>
    <property type="molecule type" value="Genomic_DNA"/>
</dbReference>
<dbReference type="EMBL" id="AE014613">
    <property type="protein sequence ID" value="AAO70566.1"/>
    <property type="molecule type" value="Genomic_DNA"/>
</dbReference>
<dbReference type="RefSeq" id="NP_457494.1">
    <property type="nucleotide sequence ID" value="NC_003198.1"/>
</dbReference>
<dbReference type="RefSeq" id="WP_001277205.1">
    <property type="nucleotide sequence ID" value="NZ_WSUR01000049.1"/>
</dbReference>
<dbReference type="SMR" id="Q8Z3U7"/>
<dbReference type="STRING" id="220341.gene:17587128"/>
<dbReference type="KEGG" id="stt:t3014"/>
<dbReference type="KEGG" id="sty:STY3255"/>
<dbReference type="PATRIC" id="fig|220341.7.peg.3319"/>
<dbReference type="eggNOG" id="COG1872">
    <property type="taxonomic scope" value="Bacteria"/>
</dbReference>
<dbReference type="HOGENOM" id="CLU_130694_5_0_6"/>
<dbReference type="OMA" id="AANKQCV"/>
<dbReference type="OrthoDB" id="9800587at2"/>
<dbReference type="Proteomes" id="UP000000541">
    <property type="component" value="Chromosome"/>
</dbReference>
<dbReference type="Proteomes" id="UP000002670">
    <property type="component" value="Chromosome"/>
</dbReference>
<dbReference type="GO" id="GO:0005737">
    <property type="term" value="C:cytoplasm"/>
    <property type="evidence" value="ECO:0007669"/>
    <property type="project" value="TreeGrafter"/>
</dbReference>
<dbReference type="Gene3D" id="3.30.1200.10">
    <property type="entry name" value="YggU-like"/>
    <property type="match status" value="1"/>
</dbReference>
<dbReference type="HAMAP" id="MF_00634">
    <property type="entry name" value="UPF0235"/>
    <property type="match status" value="1"/>
</dbReference>
<dbReference type="InterPro" id="IPR003746">
    <property type="entry name" value="DUF167"/>
</dbReference>
<dbReference type="InterPro" id="IPR036591">
    <property type="entry name" value="YggU-like_sf"/>
</dbReference>
<dbReference type="NCBIfam" id="TIGR00251">
    <property type="entry name" value="DUF167 family protein"/>
    <property type="match status" value="1"/>
</dbReference>
<dbReference type="NCBIfam" id="NF003466">
    <property type="entry name" value="PRK05090.1"/>
    <property type="match status" value="1"/>
</dbReference>
<dbReference type="PANTHER" id="PTHR13420">
    <property type="entry name" value="UPF0235 PROTEIN C15ORF40"/>
    <property type="match status" value="1"/>
</dbReference>
<dbReference type="PANTHER" id="PTHR13420:SF7">
    <property type="entry name" value="UPF0235 PROTEIN C15ORF40"/>
    <property type="match status" value="1"/>
</dbReference>
<dbReference type="Pfam" id="PF02594">
    <property type="entry name" value="DUF167"/>
    <property type="match status" value="1"/>
</dbReference>
<dbReference type="SMART" id="SM01152">
    <property type="entry name" value="DUF167"/>
    <property type="match status" value="1"/>
</dbReference>
<dbReference type="SUPFAM" id="SSF69786">
    <property type="entry name" value="YggU-like"/>
    <property type="match status" value="1"/>
</dbReference>
<comment type="similarity">
    <text evidence="1">Belongs to the UPF0235 family.</text>
</comment>
<sequence length="96" mass="10517">MSAVTRCEDGLVLRLYIQPKASRDSIVGLHGDEVKVAITAPPVDGQANSHLTKFLGKQFRVAKSQIVIEKGELGRHKQVKIIHPQQIPPEIAALTE</sequence>
<feature type="chain" id="PRO_0000139454" description="UPF0235 protein YggU">
    <location>
        <begin position="1"/>
        <end position="96"/>
    </location>
</feature>
<name>YGGU_SALTI</name>
<protein>
    <recommendedName>
        <fullName evidence="1">UPF0235 protein YggU</fullName>
    </recommendedName>
</protein>
<evidence type="ECO:0000255" key="1">
    <source>
        <dbReference type="HAMAP-Rule" id="MF_00634"/>
    </source>
</evidence>